<accession>A6WXS1</accession>
<organism>
    <name type="scientific">Brucella anthropi (strain ATCC 49188 / DSM 6882 / CCUG 24695 / JCM 21032 / LMG 3331 / NBRC 15819 / NCTC 12168 / Alc 37)</name>
    <name type="common">Ochrobactrum anthropi</name>
    <dbReference type="NCBI Taxonomy" id="439375"/>
    <lineage>
        <taxon>Bacteria</taxon>
        <taxon>Pseudomonadati</taxon>
        <taxon>Pseudomonadota</taxon>
        <taxon>Alphaproteobacteria</taxon>
        <taxon>Hyphomicrobiales</taxon>
        <taxon>Brucellaceae</taxon>
        <taxon>Brucella/Ochrobactrum group</taxon>
        <taxon>Brucella</taxon>
    </lineage>
</organism>
<feature type="chain" id="PRO_1000081082" description="Glutamate 5-kinase">
    <location>
        <begin position="1"/>
        <end position="378"/>
    </location>
</feature>
<feature type="domain" description="PUA" evidence="1">
    <location>
        <begin position="279"/>
        <end position="356"/>
    </location>
</feature>
<feature type="binding site" evidence="1">
    <location>
        <position position="14"/>
    </location>
    <ligand>
        <name>ATP</name>
        <dbReference type="ChEBI" id="CHEBI:30616"/>
    </ligand>
</feature>
<feature type="binding site" evidence="1">
    <location>
        <position position="54"/>
    </location>
    <ligand>
        <name>substrate</name>
    </ligand>
</feature>
<feature type="binding site" evidence="1">
    <location>
        <position position="141"/>
    </location>
    <ligand>
        <name>substrate</name>
    </ligand>
</feature>
<feature type="binding site" evidence="1">
    <location>
        <position position="153"/>
    </location>
    <ligand>
        <name>substrate</name>
    </ligand>
</feature>
<feature type="binding site" evidence="1">
    <location>
        <begin position="173"/>
        <end position="174"/>
    </location>
    <ligand>
        <name>ATP</name>
        <dbReference type="ChEBI" id="CHEBI:30616"/>
    </ligand>
</feature>
<dbReference type="EC" id="2.7.2.11" evidence="1"/>
<dbReference type="EMBL" id="CP000758">
    <property type="protein sequence ID" value="ABS13775.1"/>
    <property type="molecule type" value="Genomic_DNA"/>
</dbReference>
<dbReference type="RefSeq" id="WP_012091223.1">
    <property type="nucleotide sequence ID" value="NC_009667.1"/>
</dbReference>
<dbReference type="SMR" id="A6WXS1"/>
<dbReference type="STRING" id="439375.Oant_1055"/>
<dbReference type="KEGG" id="oan:Oant_1055"/>
<dbReference type="PATRIC" id="fig|439375.7.peg.1103"/>
<dbReference type="eggNOG" id="COG0263">
    <property type="taxonomic scope" value="Bacteria"/>
</dbReference>
<dbReference type="HOGENOM" id="CLU_025400_2_0_5"/>
<dbReference type="UniPathway" id="UPA00098">
    <property type="reaction ID" value="UER00359"/>
</dbReference>
<dbReference type="Proteomes" id="UP000002301">
    <property type="component" value="Chromosome 1"/>
</dbReference>
<dbReference type="GO" id="GO:0005829">
    <property type="term" value="C:cytosol"/>
    <property type="evidence" value="ECO:0007669"/>
    <property type="project" value="TreeGrafter"/>
</dbReference>
<dbReference type="GO" id="GO:0005524">
    <property type="term" value="F:ATP binding"/>
    <property type="evidence" value="ECO:0007669"/>
    <property type="project" value="UniProtKB-KW"/>
</dbReference>
<dbReference type="GO" id="GO:0004349">
    <property type="term" value="F:glutamate 5-kinase activity"/>
    <property type="evidence" value="ECO:0007669"/>
    <property type="project" value="UniProtKB-UniRule"/>
</dbReference>
<dbReference type="GO" id="GO:0003723">
    <property type="term" value="F:RNA binding"/>
    <property type="evidence" value="ECO:0007669"/>
    <property type="project" value="InterPro"/>
</dbReference>
<dbReference type="GO" id="GO:0055129">
    <property type="term" value="P:L-proline biosynthetic process"/>
    <property type="evidence" value="ECO:0007669"/>
    <property type="project" value="UniProtKB-UniRule"/>
</dbReference>
<dbReference type="CDD" id="cd04242">
    <property type="entry name" value="AAK_G5K_ProB"/>
    <property type="match status" value="1"/>
</dbReference>
<dbReference type="CDD" id="cd21157">
    <property type="entry name" value="PUA_G5K"/>
    <property type="match status" value="1"/>
</dbReference>
<dbReference type="FunFam" id="2.30.130.10:FF:000007">
    <property type="entry name" value="Glutamate 5-kinase"/>
    <property type="match status" value="1"/>
</dbReference>
<dbReference type="FunFam" id="3.40.1160.10:FF:000018">
    <property type="entry name" value="Glutamate 5-kinase"/>
    <property type="match status" value="1"/>
</dbReference>
<dbReference type="Gene3D" id="3.40.1160.10">
    <property type="entry name" value="Acetylglutamate kinase-like"/>
    <property type="match status" value="1"/>
</dbReference>
<dbReference type="Gene3D" id="2.30.130.10">
    <property type="entry name" value="PUA domain"/>
    <property type="match status" value="1"/>
</dbReference>
<dbReference type="HAMAP" id="MF_00456">
    <property type="entry name" value="ProB"/>
    <property type="match status" value="1"/>
</dbReference>
<dbReference type="InterPro" id="IPR036393">
    <property type="entry name" value="AceGlu_kinase-like_sf"/>
</dbReference>
<dbReference type="InterPro" id="IPR001048">
    <property type="entry name" value="Asp/Glu/Uridylate_kinase"/>
</dbReference>
<dbReference type="InterPro" id="IPR041739">
    <property type="entry name" value="G5K_ProB"/>
</dbReference>
<dbReference type="InterPro" id="IPR001057">
    <property type="entry name" value="Glu/AcGlu_kinase"/>
</dbReference>
<dbReference type="InterPro" id="IPR011529">
    <property type="entry name" value="Glu_5kinase"/>
</dbReference>
<dbReference type="InterPro" id="IPR005715">
    <property type="entry name" value="Glu_5kinase/COase_Synthase"/>
</dbReference>
<dbReference type="InterPro" id="IPR019797">
    <property type="entry name" value="Glutamate_5-kinase_CS"/>
</dbReference>
<dbReference type="InterPro" id="IPR002478">
    <property type="entry name" value="PUA"/>
</dbReference>
<dbReference type="InterPro" id="IPR015947">
    <property type="entry name" value="PUA-like_sf"/>
</dbReference>
<dbReference type="InterPro" id="IPR036974">
    <property type="entry name" value="PUA_sf"/>
</dbReference>
<dbReference type="NCBIfam" id="TIGR01027">
    <property type="entry name" value="proB"/>
    <property type="match status" value="1"/>
</dbReference>
<dbReference type="PANTHER" id="PTHR43654">
    <property type="entry name" value="GLUTAMATE 5-KINASE"/>
    <property type="match status" value="1"/>
</dbReference>
<dbReference type="PANTHER" id="PTHR43654:SF1">
    <property type="entry name" value="ISOPENTENYL PHOSPHATE KINASE"/>
    <property type="match status" value="1"/>
</dbReference>
<dbReference type="Pfam" id="PF00696">
    <property type="entry name" value="AA_kinase"/>
    <property type="match status" value="1"/>
</dbReference>
<dbReference type="Pfam" id="PF01472">
    <property type="entry name" value="PUA"/>
    <property type="match status" value="1"/>
</dbReference>
<dbReference type="PIRSF" id="PIRSF000729">
    <property type="entry name" value="GK"/>
    <property type="match status" value="1"/>
</dbReference>
<dbReference type="PRINTS" id="PR00474">
    <property type="entry name" value="GLU5KINASE"/>
</dbReference>
<dbReference type="SMART" id="SM00359">
    <property type="entry name" value="PUA"/>
    <property type="match status" value="1"/>
</dbReference>
<dbReference type="SUPFAM" id="SSF53633">
    <property type="entry name" value="Carbamate kinase-like"/>
    <property type="match status" value="1"/>
</dbReference>
<dbReference type="SUPFAM" id="SSF88697">
    <property type="entry name" value="PUA domain-like"/>
    <property type="match status" value="1"/>
</dbReference>
<dbReference type="PROSITE" id="PS00902">
    <property type="entry name" value="GLUTAMATE_5_KINASE"/>
    <property type="match status" value="1"/>
</dbReference>
<dbReference type="PROSITE" id="PS50890">
    <property type="entry name" value="PUA"/>
    <property type="match status" value="1"/>
</dbReference>
<sequence>MLKQLKNYRRIVVKIGSALLVDRAAGLKRDWLESLGQDIAALHHAGVEVLVVSSGAIALGRTVLGLPKKALKLEESQAAAAAGQIALAKAYADVLGGHSIRSGQILVTLSDTEERRRYLNARATIETLLKLKAVPVINENDTVATTEIRYGDNDRLAARVATMMGADLLVLLSDIDGLYTAPPHKNPDAEFLPLVETITPQIEAMAGAAASELSRGGMKTKLDAGKIANAAGTAMIITSGTRFGPLSAIDRGERATLFEPARAPVNAWKTWISGNLEPAGRLTVDAGAAKALKSGKSLLPAGVKEIDGQFERGDTVAVLNEDGREIARGLIAYDAEDARKIAGHKSDEISEILGYDARAAMIHRNDLVVRAASNAEVA</sequence>
<keyword id="KW-0028">Amino-acid biosynthesis</keyword>
<keyword id="KW-0067">ATP-binding</keyword>
<keyword id="KW-0963">Cytoplasm</keyword>
<keyword id="KW-0418">Kinase</keyword>
<keyword id="KW-0547">Nucleotide-binding</keyword>
<keyword id="KW-0641">Proline biosynthesis</keyword>
<keyword id="KW-1185">Reference proteome</keyword>
<keyword id="KW-0808">Transferase</keyword>
<reference key="1">
    <citation type="journal article" date="2011" name="J. Bacteriol.">
        <title>Genome of Ochrobactrum anthropi ATCC 49188 T, a versatile opportunistic pathogen and symbiont of several eukaryotic hosts.</title>
        <authorList>
            <person name="Chain P.S."/>
            <person name="Lang D.M."/>
            <person name="Comerci D.J."/>
            <person name="Malfatti S.A."/>
            <person name="Vergez L.M."/>
            <person name="Shin M."/>
            <person name="Ugalde R.A."/>
            <person name="Garcia E."/>
            <person name="Tolmasky M.E."/>
        </authorList>
    </citation>
    <scope>NUCLEOTIDE SEQUENCE [LARGE SCALE GENOMIC DNA]</scope>
    <source>
        <strain>ATCC 49188 / DSM 6882 / CCUG 24695 / JCM 21032 / LMG 3331 / NBRC 15819 / NCTC 12168 / Alc 37</strain>
    </source>
</reference>
<gene>
    <name evidence="1" type="primary">proB</name>
    <name type="ordered locus">Oant_1055</name>
</gene>
<comment type="function">
    <text evidence="1">Catalyzes the transfer of a phosphate group to glutamate to form L-glutamate 5-phosphate.</text>
</comment>
<comment type="catalytic activity">
    <reaction evidence="1">
        <text>L-glutamate + ATP = L-glutamyl 5-phosphate + ADP</text>
        <dbReference type="Rhea" id="RHEA:14877"/>
        <dbReference type="ChEBI" id="CHEBI:29985"/>
        <dbReference type="ChEBI" id="CHEBI:30616"/>
        <dbReference type="ChEBI" id="CHEBI:58274"/>
        <dbReference type="ChEBI" id="CHEBI:456216"/>
        <dbReference type="EC" id="2.7.2.11"/>
    </reaction>
</comment>
<comment type="pathway">
    <text evidence="1">Amino-acid biosynthesis; L-proline biosynthesis; L-glutamate 5-semialdehyde from L-glutamate: step 1/2.</text>
</comment>
<comment type="subcellular location">
    <subcellularLocation>
        <location evidence="1">Cytoplasm</location>
    </subcellularLocation>
</comment>
<comment type="similarity">
    <text evidence="1">Belongs to the glutamate 5-kinase family.</text>
</comment>
<evidence type="ECO:0000255" key="1">
    <source>
        <dbReference type="HAMAP-Rule" id="MF_00456"/>
    </source>
</evidence>
<name>PROB_BRUA4</name>
<proteinExistence type="inferred from homology"/>
<protein>
    <recommendedName>
        <fullName evidence="1">Glutamate 5-kinase</fullName>
        <ecNumber evidence="1">2.7.2.11</ecNumber>
    </recommendedName>
    <alternativeName>
        <fullName evidence="1">Gamma-glutamyl kinase</fullName>
        <shortName evidence="1">GK</shortName>
    </alternativeName>
</protein>